<evidence type="ECO:0000255" key="1">
    <source>
        <dbReference type="HAMAP-Rule" id="MF_01819"/>
    </source>
</evidence>
<sequence length="144" mass="16448">MESPLGSDLARLVRIWRALIDHRLKPLELTQTHWVTLHNIHQLPPDQSQIQLAKAIGIEQPSLVRTLDQLEDKGLISRQTCASDRRAKRIKLTEKAEPLIAEMEEVIHKTRGEILAGISSEEIELLIKLVAKLEHNIMELHSHD</sequence>
<organism>
    <name type="scientific">Salmonella paratyphi C (strain RKS4594)</name>
    <dbReference type="NCBI Taxonomy" id="476213"/>
    <lineage>
        <taxon>Bacteria</taxon>
        <taxon>Pseudomonadati</taxon>
        <taxon>Pseudomonadota</taxon>
        <taxon>Gammaproteobacteria</taxon>
        <taxon>Enterobacterales</taxon>
        <taxon>Enterobacteriaceae</taxon>
        <taxon>Salmonella</taxon>
    </lineage>
</organism>
<dbReference type="EMBL" id="CP000857">
    <property type="protein sequence ID" value="ACN46404.1"/>
    <property type="molecule type" value="Genomic_DNA"/>
</dbReference>
<dbReference type="RefSeq" id="WP_000445639.1">
    <property type="nucleotide sequence ID" value="NC_012125.1"/>
</dbReference>
<dbReference type="SMR" id="C0Q5T8"/>
<dbReference type="KEGG" id="sei:SPC_2287"/>
<dbReference type="HOGENOM" id="CLU_083287_18_2_6"/>
<dbReference type="Proteomes" id="UP000001599">
    <property type="component" value="Chromosome"/>
</dbReference>
<dbReference type="GO" id="GO:0003677">
    <property type="term" value="F:DNA binding"/>
    <property type="evidence" value="ECO:0007669"/>
    <property type="project" value="UniProtKB-UniRule"/>
</dbReference>
<dbReference type="GO" id="GO:0003700">
    <property type="term" value="F:DNA-binding transcription factor activity"/>
    <property type="evidence" value="ECO:0007669"/>
    <property type="project" value="UniProtKB-UniRule"/>
</dbReference>
<dbReference type="GO" id="GO:0006950">
    <property type="term" value="P:response to stress"/>
    <property type="evidence" value="ECO:0007669"/>
    <property type="project" value="TreeGrafter"/>
</dbReference>
<dbReference type="FunFam" id="1.10.10.10:FF:000261">
    <property type="entry name" value="Transcriptional regulator SlyA"/>
    <property type="match status" value="1"/>
</dbReference>
<dbReference type="Gene3D" id="1.10.10.10">
    <property type="entry name" value="Winged helix-like DNA-binding domain superfamily/Winged helix DNA-binding domain"/>
    <property type="match status" value="1"/>
</dbReference>
<dbReference type="HAMAP" id="MF_01819">
    <property type="entry name" value="HTH_type_SlyA"/>
    <property type="match status" value="1"/>
</dbReference>
<dbReference type="InterPro" id="IPR000835">
    <property type="entry name" value="HTH_MarR-typ"/>
</dbReference>
<dbReference type="InterPro" id="IPR039422">
    <property type="entry name" value="MarR/SlyA-like"/>
</dbReference>
<dbReference type="InterPro" id="IPR023187">
    <property type="entry name" value="Tscrpt_reg_MarR-type_CS"/>
</dbReference>
<dbReference type="InterPro" id="IPR023071">
    <property type="entry name" value="Tscrpt_reg_SlyA"/>
</dbReference>
<dbReference type="InterPro" id="IPR036388">
    <property type="entry name" value="WH-like_DNA-bd_sf"/>
</dbReference>
<dbReference type="InterPro" id="IPR036390">
    <property type="entry name" value="WH_DNA-bd_sf"/>
</dbReference>
<dbReference type="NCBIfam" id="NF002926">
    <property type="entry name" value="PRK03573.1"/>
    <property type="match status" value="1"/>
</dbReference>
<dbReference type="PANTHER" id="PTHR33164:SF64">
    <property type="entry name" value="TRANSCRIPTIONAL REGULATOR SLYA"/>
    <property type="match status" value="1"/>
</dbReference>
<dbReference type="PANTHER" id="PTHR33164">
    <property type="entry name" value="TRANSCRIPTIONAL REGULATOR, MARR FAMILY"/>
    <property type="match status" value="1"/>
</dbReference>
<dbReference type="Pfam" id="PF01047">
    <property type="entry name" value="MarR"/>
    <property type="match status" value="1"/>
</dbReference>
<dbReference type="PRINTS" id="PR00598">
    <property type="entry name" value="HTHMARR"/>
</dbReference>
<dbReference type="SMART" id="SM00347">
    <property type="entry name" value="HTH_MARR"/>
    <property type="match status" value="1"/>
</dbReference>
<dbReference type="SUPFAM" id="SSF46785">
    <property type="entry name" value="Winged helix' DNA-binding domain"/>
    <property type="match status" value="1"/>
</dbReference>
<dbReference type="PROSITE" id="PS01117">
    <property type="entry name" value="HTH_MARR_1"/>
    <property type="match status" value="1"/>
</dbReference>
<dbReference type="PROSITE" id="PS50995">
    <property type="entry name" value="HTH_MARR_2"/>
    <property type="match status" value="1"/>
</dbReference>
<reference key="1">
    <citation type="journal article" date="2009" name="PLoS ONE">
        <title>Salmonella paratyphi C: genetic divergence from Salmonella choleraesuis and pathogenic convergence with Salmonella typhi.</title>
        <authorList>
            <person name="Liu W.-Q."/>
            <person name="Feng Y."/>
            <person name="Wang Y."/>
            <person name="Zou Q.-H."/>
            <person name="Chen F."/>
            <person name="Guo J.-T."/>
            <person name="Peng Y.-H."/>
            <person name="Jin Y."/>
            <person name="Li Y.-G."/>
            <person name="Hu S.-N."/>
            <person name="Johnston R.N."/>
            <person name="Liu G.-R."/>
            <person name="Liu S.-L."/>
        </authorList>
    </citation>
    <scope>NUCLEOTIDE SEQUENCE [LARGE SCALE GENOMIC DNA]</scope>
    <source>
        <strain>RKS4594</strain>
    </source>
</reference>
<accession>C0Q5T8</accession>
<name>SLYA_SALPC</name>
<feature type="chain" id="PRO_1000188016" description="Transcriptional regulator SlyA">
    <location>
        <begin position="1"/>
        <end position="144"/>
    </location>
</feature>
<feature type="domain" description="HTH marR-type" evidence="1">
    <location>
        <begin position="2"/>
        <end position="135"/>
    </location>
</feature>
<feature type="DNA-binding region" description="H-T-H motif" evidence="1">
    <location>
        <begin position="49"/>
        <end position="72"/>
    </location>
</feature>
<gene>
    <name evidence="1" type="primary">slyA</name>
    <name type="ordered locus">SPC_2287</name>
</gene>
<keyword id="KW-0010">Activator</keyword>
<keyword id="KW-0238">DNA-binding</keyword>
<keyword id="KW-0678">Repressor</keyword>
<keyword id="KW-0804">Transcription</keyword>
<keyword id="KW-0805">Transcription regulation</keyword>
<proteinExistence type="inferred from homology"/>
<protein>
    <recommendedName>
        <fullName evidence="1">Transcriptional regulator SlyA</fullName>
    </recommendedName>
</protein>
<comment type="function">
    <text evidence="1">Transcription regulator that can specifically activate or repress expression of target genes.</text>
</comment>
<comment type="subunit">
    <text evidence="1">Homodimer.</text>
</comment>
<comment type="similarity">
    <text evidence="1">Belongs to the SlyA family.</text>
</comment>